<accession>C3LH91</accession>
<name>Y4045_BACAC</name>
<protein>
    <recommendedName>
        <fullName evidence="1">Probable transcriptional regulatory protein BAMEG_4045</fullName>
    </recommendedName>
</protein>
<feature type="chain" id="PRO_1000200075" description="Probable transcriptional regulatory protein BAMEG_4045">
    <location>
        <begin position="1"/>
        <end position="239"/>
    </location>
</feature>
<reference key="1">
    <citation type="submission" date="2008-10" db="EMBL/GenBank/DDBJ databases">
        <title>Genome sequence of Bacillus anthracis str. CDC 684.</title>
        <authorList>
            <person name="Dodson R.J."/>
            <person name="Munk A.C."/>
            <person name="Brettin T."/>
            <person name="Bruce D."/>
            <person name="Detter C."/>
            <person name="Tapia R."/>
            <person name="Han C."/>
            <person name="Sutton G."/>
            <person name="Sims D."/>
        </authorList>
    </citation>
    <scope>NUCLEOTIDE SEQUENCE [LARGE SCALE GENOMIC DNA]</scope>
    <source>
        <strain>CDC 684 / NRRL 3495</strain>
    </source>
</reference>
<keyword id="KW-0963">Cytoplasm</keyword>
<keyword id="KW-0238">DNA-binding</keyword>
<keyword id="KW-0804">Transcription</keyword>
<keyword id="KW-0805">Transcription regulation</keyword>
<comment type="subcellular location">
    <subcellularLocation>
        <location evidence="1">Cytoplasm</location>
    </subcellularLocation>
</comment>
<comment type="similarity">
    <text evidence="1">Belongs to the TACO1 family. YeeN subfamily.</text>
</comment>
<sequence length="239" mass="26358">MGRKWNNIKDKKASKDANTSRIYAKFGREIYVAAKQGEPDPESNQALRVVLERAKTYNVPRTIIDRAVEKAKGGSEENYDELRYEGFGPNGAMVIVDTLTNNVNRTAADVRAAFSKNSGNMGVNGSVAYMFDATAVIGLEGKTSDEVLEILMEADVDARDILEEEDAVIVYAEPDQFHAVQSALKDAGVEEFTVAELTMLAQNDVTLPEDAQAQFEKMVDALEDLEDVQQVYHNVDLGE</sequence>
<organism>
    <name type="scientific">Bacillus anthracis (strain CDC 684 / NRRL 3495)</name>
    <dbReference type="NCBI Taxonomy" id="568206"/>
    <lineage>
        <taxon>Bacteria</taxon>
        <taxon>Bacillati</taxon>
        <taxon>Bacillota</taxon>
        <taxon>Bacilli</taxon>
        <taxon>Bacillales</taxon>
        <taxon>Bacillaceae</taxon>
        <taxon>Bacillus</taxon>
        <taxon>Bacillus cereus group</taxon>
    </lineage>
</organism>
<proteinExistence type="inferred from homology"/>
<gene>
    <name type="ordered locus">BAMEG_4045</name>
</gene>
<dbReference type="EMBL" id="CP001215">
    <property type="protein sequence ID" value="ACP17070.1"/>
    <property type="molecule type" value="Genomic_DNA"/>
</dbReference>
<dbReference type="RefSeq" id="WP_000532948.1">
    <property type="nucleotide sequence ID" value="NC_012581.1"/>
</dbReference>
<dbReference type="SMR" id="C3LH91"/>
<dbReference type="KEGG" id="bah:BAMEG_4045"/>
<dbReference type="HOGENOM" id="CLU_062974_2_0_9"/>
<dbReference type="GO" id="GO:0005829">
    <property type="term" value="C:cytosol"/>
    <property type="evidence" value="ECO:0007669"/>
    <property type="project" value="TreeGrafter"/>
</dbReference>
<dbReference type="GO" id="GO:0003677">
    <property type="term" value="F:DNA binding"/>
    <property type="evidence" value="ECO:0007669"/>
    <property type="project" value="UniProtKB-UniRule"/>
</dbReference>
<dbReference type="GO" id="GO:0006355">
    <property type="term" value="P:regulation of DNA-templated transcription"/>
    <property type="evidence" value="ECO:0007669"/>
    <property type="project" value="UniProtKB-UniRule"/>
</dbReference>
<dbReference type="FunFam" id="1.10.10.200:FF:000003">
    <property type="entry name" value="Probable transcriptional regulatory protein YeeN"/>
    <property type="match status" value="1"/>
</dbReference>
<dbReference type="FunFam" id="3.30.70.980:FF:000004">
    <property type="entry name" value="Probable transcriptional regulatory protein YeeN"/>
    <property type="match status" value="1"/>
</dbReference>
<dbReference type="Gene3D" id="1.10.10.200">
    <property type="match status" value="1"/>
</dbReference>
<dbReference type="Gene3D" id="3.30.70.980">
    <property type="match status" value="2"/>
</dbReference>
<dbReference type="HAMAP" id="MF_00693">
    <property type="entry name" value="Transcrip_reg_TACO1"/>
    <property type="match status" value="1"/>
</dbReference>
<dbReference type="HAMAP" id="MF_00918">
    <property type="entry name" value="Transcrip_reg_TACO1_YeeN"/>
    <property type="match status" value="1"/>
</dbReference>
<dbReference type="InterPro" id="IPR017856">
    <property type="entry name" value="Integrase-like_N"/>
</dbReference>
<dbReference type="InterPro" id="IPR048300">
    <property type="entry name" value="TACO1_YebC-like_2nd/3rd_dom"/>
</dbReference>
<dbReference type="InterPro" id="IPR049083">
    <property type="entry name" value="TACO1_YebC_N"/>
</dbReference>
<dbReference type="InterPro" id="IPR002876">
    <property type="entry name" value="Transcrip_reg_TACO1-like"/>
</dbReference>
<dbReference type="InterPro" id="IPR026564">
    <property type="entry name" value="Transcrip_reg_TACO1-like_dom3"/>
</dbReference>
<dbReference type="InterPro" id="IPR026562">
    <property type="entry name" value="Transcrip_reg_TACO1_YeeN"/>
</dbReference>
<dbReference type="InterPro" id="IPR029072">
    <property type="entry name" value="YebC-like"/>
</dbReference>
<dbReference type="NCBIfam" id="NF001030">
    <property type="entry name" value="PRK00110.1"/>
    <property type="match status" value="1"/>
</dbReference>
<dbReference type="NCBIfam" id="NF009044">
    <property type="entry name" value="PRK12378.1"/>
    <property type="match status" value="1"/>
</dbReference>
<dbReference type="NCBIfam" id="TIGR01033">
    <property type="entry name" value="YebC/PmpR family DNA-binding transcriptional regulator"/>
    <property type="match status" value="1"/>
</dbReference>
<dbReference type="PANTHER" id="PTHR12532">
    <property type="entry name" value="TRANSLATIONAL ACTIVATOR OF CYTOCHROME C OXIDASE 1"/>
    <property type="match status" value="1"/>
</dbReference>
<dbReference type="PANTHER" id="PTHR12532:SF0">
    <property type="entry name" value="TRANSLATIONAL ACTIVATOR OF CYTOCHROME C OXIDASE 1"/>
    <property type="match status" value="1"/>
</dbReference>
<dbReference type="Pfam" id="PF20772">
    <property type="entry name" value="TACO1_YebC_N"/>
    <property type="match status" value="1"/>
</dbReference>
<dbReference type="Pfam" id="PF01709">
    <property type="entry name" value="Transcrip_reg"/>
    <property type="match status" value="1"/>
</dbReference>
<dbReference type="SUPFAM" id="SSF75625">
    <property type="entry name" value="YebC-like"/>
    <property type="match status" value="1"/>
</dbReference>
<evidence type="ECO:0000255" key="1">
    <source>
        <dbReference type="HAMAP-Rule" id="MF_00918"/>
    </source>
</evidence>